<reference key="1">
    <citation type="journal article" date="2009" name="Mol. Biol. Evol.">
        <title>Molecular evolution, functional variation, and proposed nomenclature of the gene family that includes sphingomyelinase D in sicariid spider venoms.</title>
        <authorList>
            <person name="Binford G.J."/>
            <person name="Bodner M.R."/>
            <person name="Cordes M.H."/>
            <person name="Baldwin K.L."/>
            <person name="Rynerson M.R."/>
            <person name="Burns S.N."/>
            <person name="Zobel-Thropp P.A."/>
        </authorList>
    </citation>
    <scope>NUCLEOTIDE SEQUENCE [MRNA]</scope>
    <scope>NOMENCLATURE</scope>
    <source>
        <tissue>Venom gland</tissue>
    </source>
</reference>
<sequence length="273" mass="30383">WIMGHMVNAIAQIDEFVNLGANSIETDVSFDKNANPEYTYHGIPCDCGRTCTKSEKFNVFLQGLQKATTPGDSKYQEKLVLVVFDLKSSSLYDNQASDAGKKLAKSLLQNYWKNGNNGGRAYIVLSIPNLAHYKLITGFKETLKTEGHPELMEKVGYDFSGNDDIDQVAKAYKKAGVTGHVWQSDGITNCLPRGLDRVKQAVANRDSSNGFINKVYYWTVDKRSTTRGALDAGVDGIMANYPDVIADVLSESAYKSKFRIATYEDNPWETFKN</sequence>
<organism>
    <name type="scientific">Loxosceles deserta</name>
    <name type="common">Desert recluse spider</name>
    <dbReference type="NCBI Taxonomy" id="424440"/>
    <lineage>
        <taxon>Eukaryota</taxon>
        <taxon>Metazoa</taxon>
        <taxon>Ecdysozoa</taxon>
        <taxon>Arthropoda</taxon>
        <taxon>Chelicerata</taxon>
        <taxon>Arachnida</taxon>
        <taxon>Araneae</taxon>
        <taxon>Araneomorphae</taxon>
        <taxon>Haplogynae</taxon>
        <taxon>Scytodoidea</taxon>
        <taxon>Sicariidae</taxon>
        <taxon>Loxosceles</taxon>
    </lineage>
</organism>
<keyword id="KW-0204">Cytolysis</keyword>
<keyword id="KW-1061">Dermonecrotic toxin</keyword>
<keyword id="KW-1015">Disulfide bond</keyword>
<keyword id="KW-0354">Hemolysis</keyword>
<keyword id="KW-0442">Lipid degradation</keyword>
<keyword id="KW-0443">Lipid metabolism</keyword>
<keyword id="KW-0456">Lyase</keyword>
<keyword id="KW-0460">Magnesium</keyword>
<keyword id="KW-0479">Metal-binding</keyword>
<keyword id="KW-0964">Secreted</keyword>
<keyword id="KW-0800">Toxin</keyword>
<feature type="chain" id="PRO_0000392801" description="Dermonecrotic toxin LdSicTox-alphaIB3aiii">
    <location>
        <begin position="1" status="less than"/>
        <end position="273"/>
    </location>
</feature>
<feature type="active site" evidence="5">
    <location>
        <position position="5"/>
    </location>
</feature>
<feature type="active site" description="Nucleophile" evidence="5">
    <location>
        <position position="41"/>
    </location>
</feature>
<feature type="binding site" evidence="5">
    <location>
        <position position="25"/>
    </location>
    <ligand>
        <name>Mg(2+)</name>
        <dbReference type="ChEBI" id="CHEBI:18420"/>
    </ligand>
</feature>
<feature type="binding site" evidence="5">
    <location>
        <position position="27"/>
    </location>
    <ligand>
        <name>Mg(2+)</name>
        <dbReference type="ChEBI" id="CHEBI:18420"/>
    </ligand>
</feature>
<feature type="binding site" evidence="5">
    <location>
        <position position="85"/>
    </location>
    <ligand>
        <name>Mg(2+)</name>
        <dbReference type="ChEBI" id="CHEBI:18420"/>
    </ligand>
</feature>
<feature type="disulfide bond" evidence="3">
    <location>
        <begin position="45"/>
        <end position="51"/>
    </location>
</feature>
<feature type="disulfide bond" evidence="3">
    <location>
        <begin position="47"/>
        <end position="190"/>
    </location>
</feature>
<feature type="non-terminal residue">
    <location>
        <position position="1"/>
    </location>
</feature>
<protein>
    <recommendedName>
        <fullName evidence="6">Dermonecrotic toxin LdSicTox-alphaIB3aiii</fullName>
        <ecNumber evidence="4">4.6.1.-</ecNumber>
    </recommendedName>
    <alternativeName>
        <fullName>Phospholipase D</fullName>
        <shortName>PLD</shortName>
    </alternativeName>
    <alternativeName>
        <fullName>Sphingomyelin phosphodiesterase D</fullName>
        <shortName>SMD</shortName>
        <shortName>SMase D</shortName>
        <shortName>Sphingomyelinase D</shortName>
    </alternativeName>
</protein>
<dbReference type="EC" id="4.6.1.-" evidence="4"/>
<dbReference type="EMBL" id="FJ171410">
    <property type="protein sequence ID" value="ACN48906.1"/>
    <property type="molecule type" value="mRNA"/>
</dbReference>
<dbReference type="SMR" id="C0JAX5"/>
<dbReference type="GO" id="GO:0005576">
    <property type="term" value="C:extracellular region"/>
    <property type="evidence" value="ECO:0007669"/>
    <property type="project" value="UniProtKB-SubCell"/>
</dbReference>
<dbReference type="GO" id="GO:0016829">
    <property type="term" value="F:lyase activity"/>
    <property type="evidence" value="ECO:0007669"/>
    <property type="project" value="UniProtKB-KW"/>
</dbReference>
<dbReference type="GO" id="GO:0046872">
    <property type="term" value="F:metal ion binding"/>
    <property type="evidence" value="ECO:0007669"/>
    <property type="project" value="UniProtKB-KW"/>
</dbReference>
<dbReference type="GO" id="GO:0008081">
    <property type="term" value="F:phosphoric diester hydrolase activity"/>
    <property type="evidence" value="ECO:0007669"/>
    <property type="project" value="InterPro"/>
</dbReference>
<dbReference type="GO" id="GO:0090729">
    <property type="term" value="F:toxin activity"/>
    <property type="evidence" value="ECO:0007669"/>
    <property type="project" value="UniProtKB-KW"/>
</dbReference>
<dbReference type="GO" id="GO:0031640">
    <property type="term" value="P:killing of cells of another organism"/>
    <property type="evidence" value="ECO:0007669"/>
    <property type="project" value="UniProtKB-KW"/>
</dbReference>
<dbReference type="GO" id="GO:0016042">
    <property type="term" value="P:lipid catabolic process"/>
    <property type="evidence" value="ECO:0007669"/>
    <property type="project" value="UniProtKB-KW"/>
</dbReference>
<dbReference type="CDD" id="cd08576">
    <property type="entry name" value="GDPD_like_SMaseD_PLD"/>
    <property type="match status" value="1"/>
</dbReference>
<dbReference type="Gene3D" id="3.20.20.190">
    <property type="entry name" value="Phosphatidylinositol (PI) phosphodiesterase"/>
    <property type="match status" value="1"/>
</dbReference>
<dbReference type="InterPro" id="IPR017946">
    <property type="entry name" value="PLC-like_Pdiesterase_TIM-brl"/>
</dbReference>
<dbReference type="SUPFAM" id="SSF51695">
    <property type="entry name" value="PLC-like phosphodiesterases"/>
    <property type="match status" value="1"/>
</dbReference>
<comment type="function">
    <text evidence="1 3">Dermonecrotic toxins cleave the phosphodiester linkage between the phosphate and headgroup of certain phospholipids (sphingolipid and lysolipid substrates), forming an alcohol (often choline) and a cyclic phosphate (By similarity). This toxin acts on sphingomyelin (SM) (By similarity). It may also act on ceramide phosphoethanolamine (CPE), lysophosphatidylcholine (LPC) and lysophosphatidylethanolamine (LPE), but not on lysophosphatidylserine (LPS), and lysophosphatidylglycerol (LPG) (By similarity). It acts by transphosphatidylation, releasing exclusively cyclic phosphate products as second products (By similarity). Induces dermonecrosis, hemolysis, increased vascular permeability, edema, inflammatory response, and platelet aggregation (By similarity).</text>
</comment>
<comment type="catalytic activity">
    <reaction evidence="1">
        <text>an N-(acyl)-sphingosylphosphocholine = an N-(acyl)-sphingosyl-1,3-cyclic phosphate + choline</text>
        <dbReference type="Rhea" id="RHEA:60652"/>
        <dbReference type="ChEBI" id="CHEBI:15354"/>
        <dbReference type="ChEBI" id="CHEBI:64583"/>
        <dbReference type="ChEBI" id="CHEBI:143892"/>
    </reaction>
</comment>
<comment type="catalytic activity">
    <reaction evidence="1">
        <text>an N-(acyl)-sphingosylphosphoethanolamine = an N-(acyl)-sphingosyl-1,3-cyclic phosphate + ethanolamine</text>
        <dbReference type="Rhea" id="RHEA:60648"/>
        <dbReference type="ChEBI" id="CHEBI:57603"/>
        <dbReference type="ChEBI" id="CHEBI:143891"/>
        <dbReference type="ChEBI" id="CHEBI:143892"/>
    </reaction>
</comment>
<comment type="catalytic activity">
    <reaction evidence="1">
        <text>a 1-acyl-sn-glycero-3-phosphocholine = a 1-acyl-sn-glycero-2,3-cyclic phosphate + choline</text>
        <dbReference type="Rhea" id="RHEA:60700"/>
        <dbReference type="ChEBI" id="CHEBI:15354"/>
        <dbReference type="ChEBI" id="CHEBI:58168"/>
        <dbReference type="ChEBI" id="CHEBI:143947"/>
    </reaction>
</comment>
<comment type="catalytic activity">
    <reaction evidence="1">
        <text>a 1-acyl-sn-glycero-3-phosphoethanolamine = a 1-acyl-sn-glycero-2,3-cyclic phosphate + ethanolamine</text>
        <dbReference type="Rhea" id="RHEA:60704"/>
        <dbReference type="ChEBI" id="CHEBI:57603"/>
        <dbReference type="ChEBI" id="CHEBI:64381"/>
        <dbReference type="ChEBI" id="CHEBI:143947"/>
    </reaction>
</comment>
<comment type="cofactor">
    <cofactor evidence="5">
        <name>Mg(2+)</name>
        <dbReference type="ChEBI" id="CHEBI:18420"/>
    </cofactor>
    <text evidence="5">Binds 1 Mg(2+) ion per subunit.</text>
</comment>
<comment type="subcellular location">
    <subcellularLocation>
        <location evidence="8">Secreted</location>
    </subcellularLocation>
</comment>
<comment type="tissue specificity">
    <text evidence="8">Expressed by the venom gland.</text>
</comment>
<comment type="similarity">
    <text evidence="7">Belongs to the arthropod phospholipase D family. Class II subfamily.</text>
</comment>
<comment type="caution">
    <text evidence="1 2 4">The most common activity assay for dermonecrotic toxins detects enzymatic activity by monitoring choline release from substrate. Liberation of choline from sphingomyelin (SM) or lysophosphatidylcholine (LPC) is commonly assumed to result from substrate hydrolysis, giving either ceramide-1-phosphate (C1P) or lysophosphatidic acid (LPA), respectively, as a second product. However, two studies from Lajoie and colleagues (2013 and 2015) report the observation of exclusive formation of cyclic phosphate products as second products, resulting from intramolecular transphosphatidylation. Cyclic phosphates have vastly different biological properties from their monoester counterparts, and they may be relevant to the pathology of brown spider envenomation.</text>
</comment>
<name>A1MA3_LOXDE</name>
<proteinExistence type="evidence at transcript level"/>
<evidence type="ECO:0000250" key="1">
    <source>
        <dbReference type="UniProtKB" id="A0A0D4WTV1"/>
    </source>
</evidence>
<evidence type="ECO:0000250" key="2">
    <source>
        <dbReference type="UniProtKB" id="A0A0D4WV12"/>
    </source>
</evidence>
<evidence type="ECO:0000250" key="3">
    <source>
        <dbReference type="UniProtKB" id="P0CE80"/>
    </source>
</evidence>
<evidence type="ECO:0000250" key="4">
    <source>
        <dbReference type="UniProtKB" id="Q4ZFU2"/>
    </source>
</evidence>
<evidence type="ECO:0000250" key="5">
    <source>
        <dbReference type="UniProtKB" id="Q8I914"/>
    </source>
</evidence>
<evidence type="ECO:0000303" key="6">
    <source>
    </source>
</evidence>
<evidence type="ECO:0000305" key="7"/>
<evidence type="ECO:0000305" key="8">
    <source>
    </source>
</evidence>
<accession>C0JAX5</accession>